<comment type="function">
    <text evidence="5 6 7">Probable chromatin-remodeling factor that is functionally redundant with CHR23 in root and shoot stem cell initiation, and root apical meristem (RAM) and shoot apical meristem (SAM) maintenance. Plays an important role in mediating the temporary plant growth arrest induced upon perception of stress (PubMed:17605754, PubMed:23062007). May promote seed maturation and repress initiation of germination (PubMed:24839909).</text>
</comment>
<comment type="catalytic activity">
    <reaction>
        <text>ATP + H2O = ADP + phosphate + H(+)</text>
        <dbReference type="Rhea" id="RHEA:13065"/>
        <dbReference type="ChEBI" id="CHEBI:15377"/>
        <dbReference type="ChEBI" id="CHEBI:15378"/>
        <dbReference type="ChEBI" id="CHEBI:30616"/>
        <dbReference type="ChEBI" id="CHEBI:43474"/>
        <dbReference type="ChEBI" id="CHEBI:456216"/>
        <dbReference type="EC" id="3.6.4.12"/>
    </reaction>
</comment>
<comment type="subcellular location">
    <subcellularLocation>
        <location evidence="1">Nucleus</location>
    </subcellularLocation>
</comment>
<comment type="tissue specificity">
    <text evidence="5">Expressed in root endodermis, cotyledons, young buds, developing cauline leaves, rosette and cauline leaf stipules, sepals of young flower buds, stigma and seeds.</text>
</comment>
<comment type="disruption phenotype">
    <text evidence="5 6">No visible phenotype under normal growth conditions, but double mutant plants chr12 and chr23 are embryonic lethal.</text>
</comment>
<comment type="similarity">
    <text evidence="11">Belongs to the helicase family.</text>
</comment>
<comment type="sequence caution" evidence="11">
    <conflict type="erroneous gene model prediction">
        <sequence resource="EMBL-CDS" id="AAF23228"/>
    </conflict>
</comment>
<accession>F4J9M5</accession>
<accession>Q9SFG5</accession>
<sequence>MVAQQLQERCGGTSQEDPVETTKSLICALNYISRDLPLPPHLFTAVSSIYHGASSSSLSDSDVSPPLPTSPPANKAPYGADLMGEFEDALLKQRPDCESGSRLIQLLDNRNKSHIQRRLSELEELPSTRGEDLQAKCLLELYGLKLRELQGKVRTAVSSEFWLRLNCADVSSQVFDWGMMRLPRPFYGVGDPFAMEADDQFRKKRDAERLSRLEEEEKNLIETAKRKFFAEVLNAVREFQLQIQATQKRRRQRNDGVQAWHGRQRQRATRAEKLRLMALKSDDQEAYMKLVKESKNERLTTLLEETNKLLANLGAAVQRQKDAKLPEGIDLLKDSESDLSELDAPRSEPLQDLLPDQDIDITESDNNDDSNDLLEGQRQYNSAIHSIQEKVTEQPSLLEGGELRSYQLEGLQWMVSLFNNNLNGILADEMGLGKTIQTISLIAYLLENKGVPGPYLIVAPKAVLPNWVNEFATWVPSIAAFLYDGRLEERKAIREKIAGEGKFNVLITHYDLIMRDKAFLKKIEWYYMIVDEGHRLKNHESALAKTLLTGYRIKRRLLLTGTPIQNSLQELWSLLNFLLPHIFNSVQNFEEWFNAPFADRGNVSLTDEEELLIIHRLHHVIRPFILRRKKDEVEKFLPGKTQVILKCDMSAWQKVYYKQVTDMGRVGLQTGSGKSKSLQNLTMQLRKCCNHPYLFVGGDYNMWKKPEIVRASGKFELLDRLLPKLRKAGHRILLFSQMTRLIDVLEIYLTLNDYKYLRLDGTTKTDQRGLLLKQFNEPDSPYFMFLLSTRAGGLGLNLQTADTVIIFDSDWNPQMDQQAEDRAHRIGQKKEVRVFVLVSVGSVEEVILERAKQKMGIDAKVIQAGLFNTTSTAQDRREMLEEIMRKGTSSLGTDVPSEREINRLAARSEDEFWMFERMDEERRRKENYRARLMQEQEVPEWAYTTQTQEEKLNNGKFHFGSVTGKRKRKEIVYSDTLSELQWLKAVESGEDLSKLSMRYNRREENASNTKTSTSKKVIESIQTVSDGTSEEDEEEQEEERAKEMSGKQRVDKSEEEEEEGEEENDGKAIFKWNTHKKKRSRYSFTCSSSDSRAQSSNGSRRK</sequence>
<evidence type="ECO:0000250" key="1"/>
<evidence type="ECO:0000255" key="2">
    <source>
        <dbReference type="PROSITE-ProRule" id="PRU00541"/>
    </source>
</evidence>
<evidence type="ECO:0000255" key="3">
    <source>
        <dbReference type="PROSITE-ProRule" id="PRU00542"/>
    </source>
</evidence>
<evidence type="ECO:0000256" key="4">
    <source>
        <dbReference type="SAM" id="MobiDB-lite"/>
    </source>
</evidence>
<evidence type="ECO:0000269" key="5">
    <source>
    </source>
</evidence>
<evidence type="ECO:0000269" key="6">
    <source>
    </source>
</evidence>
<evidence type="ECO:0000269" key="7">
    <source>
    </source>
</evidence>
<evidence type="ECO:0000303" key="8">
    <source>
    </source>
</evidence>
<evidence type="ECO:0000303" key="9">
    <source>
    </source>
</evidence>
<evidence type="ECO:0000303" key="10">
    <source>
    </source>
</evidence>
<evidence type="ECO:0000305" key="11"/>
<protein>
    <recommendedName>
        <fullName>Probable ATP-dependent DNA helicase CHR12</fullName>
        <ecNumber>3.6.4.12</ecNumber>
    </recommendedName>
    <alternativeName>
        <fullName evidence="8">Protein CHROMATIN REMODELING 12</fullName>
        <shortName evidence="9">AtCHR12</shortName>
    </alternativeName>
    <alternativeName>
        <fullName evidence="10">Protein MINUSCULE 1</fullName>
    </alternativeName>
</protein>
<keyword id="KW-0067">ATP-binding</keyword>
<keyword id="KW-0156">Chromatin regulator</keyword>
<keyword id="KW-0217">Developmental protein</keyword>
<keyword id="KW-0341">Growth regulation</keyword>
<keyword id="KW-0347">Helicase</keyword>
<keyword id="KW-0378">Hydrolase</keyword>
<keyword id="KW-0547">Nucleotide-binding</keyword>
<keyword id="KW-0539">Nucleus</keyword>
<keyword id="KW-1185">Reference proteome</keyword>
<gene>
    <name evidence="8" type="primary">CHR12</name>
    <name evidence="10" type="synonym">MINU1</name>
    <name type="ordered locus">At3g06010</name>
    <name type="ORF">F2O10.3</name>
</gene>
<name>CHR12_ARATH</name>
<dbReference type="EC" id="3.6.4.12"/>
<dbReference type="EMBL" id="AC013454">
    <property type="protein sequence ID" value="AAF23228.1"/>
    <property type="status" value="ALT_SEQ"/>
    <property type="molecule type" value="Genomic_DNA"/>
</dbReference>
<dbReference type="EMBL" id="CP002686">
    <property type="protein sequence ID" value="AEE74329.1"/>
    <property type="molecule type" value="Genomic_DNA"/>
</dbReference>
<dbReference type="RefSeq" id="NP_187252.2">
    <property type="nucleotide sequence ID" value="NM_111475.3"/>
</dbReference>
<dbReference type="SMR" id="F4J9M5"/>
<dbReference type="BioGRID" id="5107">
    <property type="interactions" value="12"/>
</dbReference>
<dbReference type="ComplexPortal" id="CPX-7727">
    <property type="entry name" value="MINU1/2-associated SWI/SNF ATP-dependent chromatin remodeling complex"/>
</dbReference>
<dbReference type="FunCoup" id="F4J9M5">
    <property type="interactions" value="3491"/>
</dbReference>
<dbReference type="STRING" id="3702.F4J9M5"/>
<dbReference type="iPTMnet" id="F4J9M5"/>
<dbReference type="PaxDb" id="3702-AT3G06010.1"/>
<dbReference type="ProteomicsDB" id="246783"/>
<dbReference type="EnsemblPlants" id="AT3G06010.1">
    <property type="protein sequence ID" value="AT3G06010.1"/>
    <property type="gene ID" value="AT3G06010"/>
</dbReference>
<dbReference type="GeneID" id="819772"/>
<dbReference type="Gramene" id="AT3G06010.1">
    <property type="protein sequence ID" value="AT3G06010.1"/>
    <property type="gene ID" value="AT3G06010"/>
</dbReference>
<dbReference type="KEGG" id="ath:AT3G06010"/>
<dbReference type="Araport" id="AT3G06010"/>
<dbReference type="TAIR" id="AT3G06010">
    <property type="gene designation" value="ATCHR12"/>
</dbReference>
<dbReference type="eggNOG" id="KOG0386">
    <property type="taxonomic scope" value="Eukaryota"/>
</dbReference>
<dbReference type="HOGENOM" id="CLU_000315_15_3_1"/>
<dbReference type="InParanoid" id="F4J9M5"/>
<dbReference type="OMA" id="DYFRMAH"/>
<dbReference type="PRO" id="PR:F4J9M5"/>
<dbReference type="Proteomes" id="UP000006548">
    <property type="component" value="Chromosome 3"/>
</dbReference>
<dbReference type="ExpressionAtlas" id="F4J9M5">
    <property type="expression patterns" value="baseline and differential"/>
</dbReference>
<dbReference type="GO" id="GO:0005634">
    <property type="term" value="C:nucleus"/>
    <property type="evidence" value="ECO:0007669"/>
    <property type="project" value="UniProtKB-SubCell"/>
</dbReference>
<dbReference type="GO" id="GO:0005524">
    <property type="term" value="F:ATP binding"/>
    <property type="evidence" value="ECO:0007669"/>
    <property type="project" value="UniProtKB-KW"/>
</dbReference>
<dbReference type="GO" id="GO:0016887">
    <property type="term" value="F:ATP hydrolysis activity"/>
    <property type="evidence" value="ECO:0007669"/>
    <property type="project" value="RHEA"/>
</dbReference>
<dbReference type="GO" id="GO:0004386">
    <property type="term" value="F:helicase activity"/>
    <property type="evidence" value="ECO:0007669"/>
    <property type="project" value="UniProtKB-KW"/>
</dbReference>
<dbReference type="GO" id="GO:0042393">
    <property type="term" value="F:histone binding"/>
    <property type="evidence" value="ECO:0007669"/>
    <property type="project" value="InterPro"/>
</dbReference>
<dbReference type="GO" id="GO:0006325">
    <property type="term" value="P:chromatin organization"/>
    <property type="evidence" value="ECO:0007669"/>
    <property type="project" value="UniProtKB-KW"/>
</dbReference>
<dbReference type="GO" id="GO:0010078">
    <property type="term" value="P:maintenance of root meristem identity"/>
    <property type="evidence" value="ECO:0000315"/>
    <property type="project" value="UniProtKB"/>
</dbReference>
<dbReference type="GO" id="GO:0010231">
    <property type="term" value="P:maintenance of seed dormancy"/>
    <property type="evidence" value="ECO:0000315"/>
    <property type="project" value="UniProtKB"/>
</dbReference>
<dbReference type="GO" id="GO:0010492">
    <property type="term" value="P:maintenance of shoot apical meristem identity"/>
    <property type="evidence" value="ECO:0000315"/>
    <property type="project" value="UniProtKB"/>
</dbReference>
<dbReference type="GO" id="GO:0009408">
    <property type="term" value="P:response to heat"/>
    <property type="evidence" value="ECO:0000315"/>
    <property type="project" value="TAIR"/>
</dbReference>
<dbReference type="GO" id="GO:0009651">
    <property type="term" value="P:response to salt stress"/>
    <property type="evidence" value="ECO:0000315"/>
    <property type="project" value="TAIR"/>
</dbReference>
<dbReference type="GO" id="GO:0009414">
    <property type="term" value="P:response to water deprivation"/>
    <property type="evidence" value="ECO:0000315"/>
    <property type="project" value="TAIR"/>
</dbReference>
<dbReference type="CDD" id="cd18793">
    <property type="entry name" value="SF2_C_SNF"/>
    <property type="match status" value="1"/>
</dbReference>
<dbReference type="FunFam" id="3.40.50.10810:FF:000016">
    <property type="entry name" value="Chromatin structure-remodeling complex protein SYD"/>
    <property type="match status" value="1"/>
</dbReference>
<dbReference type="FunFam" id="3.40.50.300:FF:000755">
    <property type="entry name" value="Probable ATP-dependent DNA helicase CHR12"/>
    <property type="match status" value="1"/>
</dbReference>
<dbReference type="Gene3D" id="3.40.50.300">
    <property type="entry name" value="P-loop containing nucleotide triphosphate hydrolases"/>
    <property type="match status" value="1"/>
</dbReference>
<dbReference type="Gene3D" id="3.40.50.10810">
    <property type="entry name" value="Tandem AAA-ATPase domain"/>
    <property type="match status" value="1"/>
</dbReference>
<dbReference type="InterPro" id="IPR014001">
    <property type="entry name" value="Helicase_ATP-bd"/>
</dbReference>
<dbReference type="InterPro" id="IPR001650">
    <property type="entry name" value="Helicase_C-like"/>
</dbReference>
<dbReference type="InterPro" id="IPR027417">
    <property type="entry name" value="P-loop_NTPase"/>
</dbReference>
<dbReference type="InterPro" id="IPR029295">
    <property type="entry name" value="SnAC"/>
</dbReference>
<dbReference type="InterPro" id="IPR038718">
    <property type="entry name" value="SNF2-like_sf"/>
</dbReference>
<dbReference type="InterPro" id="IPR049730">
    <property type="entry name" value="SNF2/RAD54-like_C"/>
</dbReference>
<dbReference type="InterPro" id="IPR000330">
    <property type="entry name" value="SNF2_N"/>
</dbReference>
<dbReference type="PANTHER" id="PTHR10799">
    <property type="entry name" value="SNF2/RAD54 HELICASE FAMILY"/>
    <property type="match status" value="1"/>
</dbReference>
<dbReference type="Pfam" id="PF00271">
    <property type="entry name" value="Helicase_C"/>
    <property type="match status" value="1"/>
</dbReference>
<dbReference type="Pfam" id="PF14619">
    <property type="entry name" value="SnAC"/>
    <property type="match status" value="1"/>
</dbReference>
<dbReference type="Pfam" id="PF00176">
    <property type="entry name" value="SNF2-rel_dom"/>
    <property type="match status" value="1"/>
</dbReference>
<dbReference type="SMART" id="SM00487">
    <property type="entry name" value="DEXDc"/>
    <property type="match status" value="1"/>
</dbReference>
<dbReference type="SMART" id="SM00490">
    <property type="entry name" value="HELICc"/>
    <property type="match status" value="1"/>
</dbReference>
<dbReference type="SMART" id="SM01314">
    <property type="entry name" value="SnAC"/>
    <property type="match status" value="1"/>
</dbReference>
<dbReference type="SUPFAM" id="SSF52540">
    <property type="entry name" value="P-loop containing nucleoside triphosphate hydrolases"/>
    <property type="match status" value="2"/>
</dbReference>
<dbReference type="PROSITE" id="PS51192">
    <property type="entry name" value="HELICASE_ATP_BIND_1"/>
    <property type="match status" value="1"/>
</dbReference>
<dbReference type="PROSITE" id="PS51194">
    <property type="entry name" value="HELICASE_CTER"/>
    <property type="match status" value="1"/>
</dbReference>
<proteinExistence type="evidence at transcript level"/>
<reference key="1">
    <citation type="journal article" date="2000" name="Nature">
        <title>Sequence and analysis of chromosome 3 of the plant Arabidopsis thaliana.</title>
        <authorList>
            <person name="Salanoubat M."/>
            <person name="Lemcke K."/>
            <person name="Rieger M."/>
            <person name="Ansorge W."/>
            <person name="Unseld M."/>
            <person name="Fartmann B."/>
            <person name="Valle G."/>
            <person name="Bloecker H."/>
            <person name="Perez-Alonso M."/>
            <person name="Obermaier B."/>
            <person name="Delseny M."/>
            <person name="Boutry M."/>
            <person name="Grivell L.A."/>
            <person name="Mache R."/>
            <person name="Puigdomenech P."/>
            <person name="De Simone V."/>
            <person name="Choisne N."/>
            <person name="Artiguenave F."/>
            <person name="Robert C."/>
            <person name="Brottier P."/>
            <person name="Wincker P."/>
            <person name="Cattolico L."/>
            <person name="Weissenbach J."/>
            <person name="Saurin W."/>
            <person name="Quetier F."/>
            <person name="Schaefer M."/>
            <person name="Mueller-Auer S."/>
            <person name="Gabel C."/>
            <person name="Fuchs M."/>
            <person name="Benes V."/>
            <person name="Wurmbach E."/>
            <person name="Drzonek H."/>
            <person name="Erfle H."/>
            <person name="Jordan N."/>
            <person name="Bangert S."/>
            <person name="Wiedelmann R."/>
            <person name="Kranz H."/>
            <person name="Voss H."/>
            <person name="Holland R."/>
            <person name="Brandt P."/>
            <person name="Nyakatura G."/>
            <person name="Vezzi A."/>
            <person name="D'Angelo M."/>
            <person name="Pallavicini A."/>
            <person name="Toppo S."/>
            <person name="Simionati B."/>
            <person name="Conrad A."/>
            <person name="Hornischer K."/>
            <person name="Kauer G."/>
            <person name="Loehnert T.-H."/>
            <person name="Nordsiek G."/>
            <person name="Reichelt J."/>
            <person name="Scharfe M."/>
            <person name="Schoen O."/>
            <person name="Bargues M."/>
            <person name="Terol J."/>
            <person name="Climent J."/>
            <person name="Navarro P."/>
            <person name="Collado C."/>
            <person name="Perez-Perez A."/>
            <person name="Ottenwaelder B."/>
            <person name="Duchemin D."/>
            <person name="Cooke R."/>
            <person name="Laudie M."/>
            <person name="Berger-Llauro C."/>
            <person name="Purnelle B."/>
            <person name="Masuy D."/>
            <person name="de Haan M."/>
            <person name="Maarse A.C."/>
            <person name="Alcaraz J.-P."/>
            <person name="Cottet A."/>
            <person name="Casacuberta E."/>
            <person name="Monfort A."/>
            <person name="Argiriou A."/>
            <person name="Flores M."/>
            <person name="Liguori R."/>
            <person name="Vitale D."/>
            <person name="Mannhaupt G."/>
            <person name="Haase D."/>
            <person name="Schoof H."/>
            <person name="Rudd S."/>
            <person name="Zaccaria P."/>
            <person name="Mewes H.-W."/>
            <person name="Mayer K.F.X."/>
            <person name="Kaul S."/>
            <person name="Town C.D."/>
            <person name="Koo H.L."/>
            <person name="Tallon L.J."/>
            <person name="Jenkins J."/>
            <person name="Rooney T."/>
            <person name="Rizzo M."/>
            <person name="Walts A."/>
            <person name="Utterback T."/>
            <person name="Fujii C.Y."/>
            <person name="Shea T.P."/>
            <person name="Creasy T.H."/>
            <person name="Haas B."/>
            <person name="Maiti R."/>
            <person name="Wu D."/>
            <person name="Peterson J."/>
            <person name="Van Aken S."/>
            <person name="Pai G."/>
            <person name="Militscher J."/>
            <person name="Sellers P."/>
            <person name="Gill J.E."/>
            <person name="Feldblyum T.V."/>
            <person name="Preuss D."/>
            <person name="Lin X."/>
            <person name="Nierman W.C."/>
            <person name="Salzberg S.L."/>
            <person name="White O."/>
            <person name="Venter J.C."/>
            <person name="Fraser C.M."/>
            <person name="Kaneko T."/>
            <person name="Nakamura Y."/>
            <person name="Sato S."/>
            <person name="Kato T."/>
            <person name="Asamizu E."/>
            <person name="Sasamoto S."/>
            <person name="Kimura T."/>
            <person name="Idesawa K."/>
            <person name="Kawashima K."/>
            <person name="Kishida Y."/>
            <person name="Kiyokawa C."/>
            <person name="Kohara M."/>
            <person name="Matsumoto M."/>
            <person name="Matsuno A."/>
            <person name="Muraki A."/>
            <person name="Nakayama S."/>
            <person name="Nakazaki N."/>
            <person name="Shinpo S."/>
            <person name="Takeuchi C."/>
            <person name="Wada T."/>
            <person name="Watanabe A."/>
            <person name="Yamada M."/>
            <person name="Yasuda M."/>
            <person name="Tabata S."/>
        </authorList>
    </citation>
    <scope>NUCLEOTIDE SEQUENCE [LARGE SCALE GENOMIC DNA]</scope>
    <source>
        <strain>cv. Columbia</strain>
    </source>
</reference>
<reference key="2">
    <citation type="journal article" date="2017" name="Plant J.">
        <title>Araport11: a complete reannotation of the Arabidopsis thaliana reference genome.</title>
        <authorList>
            <person name="Cheng C.Y."/>
            <person name="Krishnakumar V."/>
            <person name="Chan A.P."/>
            <person name="Thibaud-Nissen F."/>
            <person name="Schobel S."/>
            <person name="Town C.D."/>
        </authorList>
    </citation>
    <scope>GENOME REANNOTATION</scope>
    <source>
        <strain>cv. Columbia</strain>
    </source>
</reference>
<reference key="3">
    <citation type="journal article" date="2006" name="Genetics">
        <title>Involvement of the Arabidopsis SWI2/SNF2 chromatin remodeling gene family in DNA damage response and recombination.</title>
        <authorList>
            <person name="Shaked H."/>
            <person name="Avivi-Ragolsky N."/>
            <person name="Levy A.A."/>
        </authorList>
    </citation>
    <scope>GENE FAMILY</scope>
    <scope>NOMENCLATURE</scope>
</reference>
<reference key="4">
    <citation type="journal article" date="2007" name="Plant J.">
        <title>The SWI/SNF chromatin-remodeling gene AtCHR12 mediates temporary growth arrest in Arabidopsis thaliana upon perceiving environmental stress.</title>
        <authorList>
            <person name="Mlynarova L."/>
            <person name="Nap J.-P."/>
            <person name="Bisseling T."/>
        </authorList>
    </citation>
    <scope>FUNCTION</scope>
    <scope>TISSUE SPECIFICITY</scope>
    <scope>DISRUPTION PHENOTYPE</scope>
</reference>
<reference key="5">
    <citation type="journal article" date="2012" name="Plant J.">
        <title>Mutations in two non-canonical Arabidopsis SWI2/SNF2 chromatin remodeling ATPases cause embryogenesis and stem cell maintenance defects.</title>
        <authorList>
            <person name="Sang Y."/>
            <person name="Silva-Ortega C.O."/>
            <person name="Wu S."/>
            <person name="Yamaguchi N."/>
            <person name="Wu M.F."/>
            <person name="Pfluger J."/>
            <person name="Gillmor C.S."/>
            <person name="Gallagher K.L."/>
            <person name="Wagner D."/>
        </authorList>
    </citation>
    <scope>FUNCTION</scope>
    <scope>DISRUPTION PHENOTYPE</scope>
</reference>
<reference key="6">
    <citation type="journal article" date="2013" name="PLoS ONE">
        <title>Genome-wide comparative in silico analysis of the RNA helicase gene family in Zea mays and Glycine max: a comparison with Arabidopsis and Oryza sativa.</title>
        <authorList>
            <person name="Xu R."/>
            <person name="Zhang S."/>
            <person name="Huang J."/>
            <person name="Zheng C."/>
        </authorList>
    </citation>
    <scope>GENE FAMILY</scope>
</reference>
<reference key="7">
    <citation type="journal article" date="2015" name="Physiol. Plantarum">
        <title>Reduced seed germination in Arabidopsis over-expressing SWI/SNF2 ATPase genes.</title>
        <authorList>
            <person name="Leeggangers H.A."/>
            <person name="Folta A."/>
            <person name="Muras A."/>
            <person name="Nap J.P."/>
            <person name="Mlynarova L."/>
        </authorList>
    </citation>
    <scope>FUNCTION</scope>
</reference>
<organism>
    <name type="scientific">Arabidopsis thaliana</name>
    <name type="common">Mouse-ear cress</name>
    <dbReference type="NCBI Taxonomy" id="3702"/>
    <lineage>
        <taxon>Eukaryota</taxon>
        <taxon>Viridiplantae</taxon>
        <taxon>Streptophyta</taxon>
        <taxon>Embryophyta</taxon>
        <taxon>Tracheophyta</taxon>
        <taxon>Spermatophyta</taxon>
        <taxon>Magnoliopsida</taxon>
        <taxon>eudicotyledons</taxon>
        <taxon>Gunneridae</taxon>
        <taxon>Pentapetalae</taxon>
        <taxon>rosids</taxon>
        <taxon>malvids</taxon>
        <taxon>Brassicales</taxon>
        <taxon>Brassicaceae</taxon>
        <taxon>Camelineae</taxon>
        <taxon>Arabidopsis</taxon>
    </lineage>
</organism>
<feature type="chain" id="PRO_0000429439" description="Probable ATP-dependent DNA helicase CHR12">
    <location>
        <begin position="1"/>
        <end position="1102"/>
    </location>
</feature>
<feature type="domain" description="Helicase ATP-binding" evidence="2">
    <location>
        <begin position="415"/>
        <end position="581"/>
    </location>
</feature>
<feature type="domain" description="Helicase C-terminal" evidence="3">
    <location>
        <begin position="717"/>
        <end position="884"/>
    </location>
</feature>
<feature type="region of interest" description="Disordered" evidence="4">
    <location>
        <begin position="55"/>
        <end position="76"/>
    </location>
</feature>
<feature type="region of interest" description="Disordered" evidence="4">
    <location>
        <begin position="1002"/>
        <end position="1102"/>
    </location>
</feature>
<feature type="short sequence motif" description="DEAH box">
    <location>
        <begin position="531"/>
        <end position="534"/>
    </location>
</feature>
<feature type="compositionally biased region" description="Low complexity" evidence="4">
    <location>
        <begin position="55"/>
        <end position="64"/>
    </location>
</feature>
<feature type="compositionally biased region" description="Polar residues" evidence="4">
    <location>
        <begin position="1006"/>
        <end position="1027"/>
    </location>
</feature>
<feature type="compositionally biased region" description="Acidic residues" evidence="4">
    <location>
        <begin position="1028"/>
        <end position="1038"/>
    </location>
</feature>
<feature type="compositionally biased region" description="Basic and acidic residues" evidence="4">
    <location>
        <begin position="1039"/>
        <end position="1052"/>
    </location>
</feature>
<feature type="compositionally biased region" description="Acidic residues" evidence="4">
    <location>
        <begin position="1053"/>
        <end position="1064"/>
    </location>
</feature>
<feature type="compositionally biased region" description="Polar residues" evidence="4">
    <location>
        <begin position="1082"/>
        <end position="1102"/>
    </location>
</feature>
<feature type="binding site" evidence="2">
    <location>
        <begin position="428"/>
        <end position="435"/>
    </location>
    <ligand>
        <name>ATP</name>
        <dbReference type="ChEBI" id="CHEBI:30616"/>
    </ligand>
</feature>